<evidence type="ECO:0000269" key="1">
    <source>
    </source>
</evidence>
<evidence type="ECO:0000269" key="2">
    <source>
    </source>
</evidence>
<evidence type="ECO:0000269" key="3">
    <source>
    </source>
</evidence>
<evidence type="ECO:0000269" key="4">
    <source>
    </source>
</evidence>
<evidence type="ECO:0000269" key="5">
    <source>
    </source>
</evidence>
<evidence type="ECO:0000303" key="6">
    <source>
    </source>
</evidence>
<evidence type="ECO:0007829" key="7">
    <source>
        <dbReference type="PDB" id="2LEZ"/>
    </source>
</evidence>
<accession>Q8ZMM8</accession>
<accession>Q6QNB4</accession>
<organism>
    <name type="scientific">Salmonella typhimurium (strain LT2 / SGSC1412 / ATCC 700720)</name>
    <dbReference type="NCBI Taxonomy" id="99287"/>
    <lineage>
        <taxon>Bacteria</taxon>
        <taxon>Pseudomonadati</taxon>
        <taxon>Pseudomonadota</taxon>
        <taxon>Gammaproteobacteria</taxon>
        <taxon>Enterobacterales</taxon>
        <taxon>Enterobacteriaceae</taxon>
        <taxon>Salmonella</taxon>
    </lineage>
</organism>
<proteinExistence type="evidence at protein level"/>
<name>PIPB2_SALTY</name>
<feature type="chain" id="PRO_0000278299" description="Secreted effector protein PipB2">
    <location>
        <begin position="1"/>
        <end position="350"/>
    </location>
</feature>
<feature type="domain" description="Pentapeptide repeat 1">
    <location>
        <begin position="162"/>
        <end position="201"/>
    </location>
</feature>
<feature type="domain" description="Pentapeptide repeat 2">
    <location>
        <begin position="202"/>
        <end position="241"/>
    </location>
</feature>
<feature type="domain" description="Pentapeptide repeat 3">
    <location>
        <begin position="247"/>
        <end position="286"/>
    </location>
</feature>
<feature type="domain" description="Pentapeptide repeat 4">
    <location>
        <begin position="287"/>
        <end position="326"/>
    </location>
</feature>
<feature type="mutagenesis site" description="No effect." evidence="3">
    <original>T</original>
    <variation>A</variation>
    <location>
        <position position="340"/>
    </location>
</feature>
<feature type="mutagenesis site" description="Prevents the peripheral accumulation of GFP-PipB2 and LAMP-1. Slightly affects its LE/Lys redistribution." evidence="3">
    <original>L</original>
    <variation>A</variation>
    <location>
        <position position="341"/>
    </location>
</feature>
<feature type="mutagenesis site" description="Partial reduction in the peripheral accumulation of GFP-PipB2 and LAMP-1." evidence="3">
    <original>F</original>
    <variation>A</variation>
    <location>
        <position position="342"/>
    </location>
</feature>
<feature type="mutagenesis site" description="Increases LAMP-1 redistribution. No effect on peripheral accumulation of GFP-PipB2." evidence="3">
    <original>N</original>
    <variation>A</variation>
    <location>
        <position position="343"/>
    </location>
</feature>
<feature type="mutagenesis site" description="Decreases LAMP-1 redistribution. No effect on peripheral accumulation of GFP-PipB2." evidence="3">
    <original>E</original>
    <variation>A</variation>
    <location>
        <position position="344"/>
    </location>
</feature>
<feature type="mutagenesis site" description="Prevents LE/Lys redistribution. Does not affect the peripheral accumulation of GFP-PipB2." evidence="3">
    <original>F</original>
    <variation>A</variation>
    <location>
        <position position="345"/>
    </location>
</feature>
<feature type="mutagenesis site" description="No effect." evidence="3">
    <original>Y</original>
    <variation>A</variation>
    <location>
        <position position="346"/>
    </location>
</feature>
<feature type="helix" evidence="7">
    <location>
        <begin position="21"/>
        <end position="25"/>
    </location>
</feature>
<feature type="helix" evidence="7">
    <location>
        <begin position="30"/>
        <end position="43"/>
    </location>
</feature>
<feature type="strand" evidence="7">
    <location>
        <begin position="47"/>
        <end position="49"/>
    </location>
</feature>
<feature type="helix" evidence="7">
    <location>
        <begin position="50"/>
        <end position="68"/>
    </location>
</feature>
<feature type="strand" evidence="7">
    <location>
        <begin position="69"/>
        <end position="74"/>
    </location>
</feature>
<feature type="strand" evidence="7">
    <location>
        <begin position="78"/>
        <end position="85"/>
    </location>
</feature>
<feature type="strand" evidence="7">
    <location>
        <begin position="88"/>
        <end position="93"/>
    </location>
</feature>
<feature type="strand" evidence="7">
    <location>
        <begin position="103"/>
        <end position="110"/>
    </location>
</feature>
<feature type="strand" evidence="7">
    <location>
        <begin position="113"/>
        <end position="120"/>
    </location>
</feature>
<feature type="helix" evidence="7">
    <location>
        <begin position="121"/>
        <end position="135"/>
    </location>
</feature>
<gene>
    <name type="primary">pipB2</name>
    <name type="ordered locus">STM2780</name>
</gene>
<reference key="1">
    <citation type="journal article" date="2003" name="Mol. Microbiol.">
        <title>Salmonella type III effectors PipB and PipB2 are targeted to detergent-resistant microdomains on internal host cell membranes.</title>
        <authorList>
            <person name="Knodler L.A."/>
            <person name="Vallance B.A."/>
            <person name="Hensel M."/>
            <person name="Jaeckel D."/>
            <person name="Finlay B.B."/>
            <person name="Steele-Mortimer O."/>
        </authorList>
    </citation>
    <scope>NUCLEOTIDE SEQUENCE [GENOMIC DNA]</scope>
    <scope>FUNCTION</scope>
    <scope>DOMAIN</scope>
    <scope>REGULATION BY SSRA/SSRB</scope>
    <scope>SIMILARITY</scope>
    <scope>SUBCELLULAR LOCATION</scope>
    <source>
        <strain>SL1344</strain>
    </source>
</reference>
<reference key="2">
    <citation type="journal article" date="2001" name="Nature">
        <title>Complete genome sequence of Salmonella enterica serovar Typhimurium LT2.</title>
        <authorList>
            <person name="McClelland M."/>
            <person name="Sanderson K.E."/>
            <person name="Spieth J."/>
            <person name="Clifton S.W."/>
            <person name="Latreille P."/>
            <person name="Courtney L."/>
            <person name="Porwollik S."/>
            <person name="Ali J."/>
            <person name="Dante M."/>
            <person name="Du F."/>
            <person name="Hou S."/>
            <person name="Layman D."/>
            <person name="Leonard S."/>
            <person name="Nguyen C."/>
            <person name="Scott K."/>
            <person name="Holmes A."/>
            <person name="Grewal N."/>
            <person name="Mulvaney E."/>
            <person name="Ryan E."/>
            <person name="Sun H."/>
            <person name="Florea L."/>
            <person name="Miller W."/>
            <person name="Stoneking T."/>
            <person name="Nhan M."/>
            <person name="Waterston R."/>
            <person name="Wilson R.K."/>
        </authorList>
    </citation>
    <scope>NUCLEOTIDE SEQUENCE [LARGE SCALE GENOMIC DNA]</scope>
    <source>
        <strain>LT2 / SGSC1412 / ATCC 700720</strain>
    </source>
</reference>
<reference key="3">
    <citation type="journal article" date="2005" name="Mol. Biol. Cell">
        <title>The Salmonella effector PipB2 affects late endosome/lysosome distribution to mediate Sif extension.</title>
        <authorList>
            <person name="Knodler L.A."/>
            <person name="Steele-Mortimer O."/>
        </authorList>
    </citation>
    <scope>FUNCTION</scope>
    <scope>FUNCTION OF C-TERMINAL DOMAIN</scope>
    <scope>REGULATION</scope>
    <scope>SUBCELLULAR LOCATION</scope>
    <scope>MUTAGENESIS OF THR-340; LEU-341; PHE-342; ASN-343; GLU-344; PHE-345 AND TYR-346</scope>
    <source>
        <strain>SL1344</strain>
    </source>
</reference>
<reference key="4">
    <citation type="journal article" date="2005" name="Mol. Microbiol.">
        <title>Co-regulation of Salmonella enterica genes required for virulence and resistance to antimicrobial peptides by SlyA and PhoP/PhoQ.</title>
        <authorList>
            <person name="Navarre W.W."/>
            <person name="Halsey T.A."/>
            <person name="Walthers D."/>
            <person name="Frye J."/>
            <person name="McClelland M."/>
            <person name="Potter J.L."/>
            <person name="Kenney L.J."/>
            <person name="Gunn J.S."/>
            <person name="Fang F.C."/>
            <person name="Libby S.J."/>
        </authorList>
    </citation>
    <scope>REGULATION BY SLYA AND PHOP/PHOQ</scope>
    <source>
        <strain>ATCC 14028s / SGSG 2262</strain>
        <strain>LT2 / SGSC1412 / ATCC 700720</strain>
    </source>
</reference>
<reference key="5">
    <citation type="journal article" date="2006" name="Proc. Natl. Acad. Sci. U.S.A.">
        <title>The Salmonella effector protein PipB2 is a linker for kinesin-1.</title>
        <authorList>
            <person name="Henry T."/>
            <person name="Couillault C."/>
            <person name="Rockenfeller P."/>
            <person name="Boucrot E."/>
            <person name="Dumont A."/>
            <person name="Schroeder N."/>
            <person name="Hermant A."/>
            <person name="Knodler L.A."/>
            <person name="Lecine P."/>
            <person name="Steele-Mortimer O."/>
            <person name="Borg J.-P."/>
            <person name="Gorvel J.-P."/>
            <person name="Meresse S."/>
        </authorList>
    </citation>
    <scope>FUNCTION</scope>
    <scope>FUNCTION OF THE C-TERMINAL PENTAPEPTIDE DOMAIN</scope>
    <scope>SUBUNIT</scope>
    <source>
        <strain>ATCC 14028 / SGSG 2980 / CDC 6516-60 / NCTC 12023</strain>
        <strain>SL1344</strain>
    </source>
</reference>
<reference key="6">
    <citation type="journal article" date="2010" name="Infect. Immun.">
        <title>Systematic analysis of the SsrAB virulon of Salmonella enterica.</title>
        <authorList>
            <person name="Xu X."/>
            <person name="Hensel M."/>
        </authorList>
    </citation>
    <scope>INDUCTION</scope>
    <source>
        <strain evidence="6">ATCC 14028 / SGSC 2980 / CDC 6516-60 / NCTC 12023</strain>
    </source>
</reference>
<dbReference type="EMBL" id="AY532917">
    <property type="protein sequence ID" value="AAS66036.1"/>
    <property type="molecule type" value="Genomic_DNA"/>
</dbReference>
<dbReference type="EMBL" id="AE006468">
    <property type="protein sequence ID" value="AAL21665.1"/>
    <property type="molecule type" value="Genomic_DNA"/>
</dbReference>
<dbReference type="RefSeq" id="NP_461706.1">
    <property type="nucleotide sequence ID" value="NC_003197.2"/>
</dbReference>
<dbReference type="RefSeq" id="WP_001738474.1">
    <property type="nucleotide sequence ID" value="NC_003197.2"/>
</dbReference>
<dbReference type="PDB" id="2LEZ">
    <property type="method" value="NMR"/>
    <property type="chains" value="A=17-161"/>
</dbReference>
<dbReference type="PDBsum" id="2LEZ"/>
<dbReference type="BMRB" id="Q8ZMM8"/>
<dbReference type="SMR" id="Q8ZMM8"/>
<dbReference type="DIP" id="DIP-61260N"/>
<dbReference type="IntAct" id="Q8ZMM8">
    <property type="interactions" value="3"/>
</dbReference>
<dbReference type="STRING" id="99287.STM2780"/>
<dbReference type="PaxDb" id="99287-STM2780"/>
<dbReference type="GeneID" id="1254303"/>
<dbReference type="KEGG" id="stm:STM2780"/>
<dbReference type="PATRIC" id="fig|99287.12.peg.2931"/>
<dbReference type="HOGENOM" id="CLU_067808_0_0_6"/>
<dbReference type="OMA" id="ADCDGAN"/>
<dbReference type="PhylomeDB" id="Q8ZMM8"/>
<dbReference type="BioCyc" id="SENT99287:STM2780-MONOMER"/>
<dbReference type="EvolutionaryTrace" id="Q8ZMM8"/>
<dbReference type="Proteomes" id="UP000001014">
    <property type="component" value="Chromosome"/>
</dbReference>
<dbReference type="GO" id="GO:0005576">
    <property type="term" value="C:extracellular region"/>
    <property type="evidence" value="ECO:0007669"/>
    <property type="project" value="UniProtKB-SubCell"/>
</dbReference>
<dbReference type="GO" id="GO:0033644">
    <property type="term" value="C:host cell membrane"/>
    <property type="evidence" value="ECO:0007669"/>
    <property type="project" value="UniProtKB-SubCell"/>
</dbReference>
<dbReference type="GO" id="GO:0016020">
    <property type="term" value="C:membrane"/>
    <property type="evidence" value="ECO:0007669"/>
    <property type="project" value="UniProtKB-KW"/>
</dbReference>
<dbReference type="Gene3D" id="2.160.20.80">
    <property type="entry name" value="E3 ubiquitin-protein ligase SopA"/>
    <property type="match status" value="1"/>
</dbReference>
<dbReference type="Gene3D" id="3.30.2450.10">
    <property type="entry name" value="Secreted effector protein pipB2"/>
    <property type="match status" value="1"/>
</dbReference>
<dbReference type="InterPro" id="IPR001646">
    <property type="entry name" value="5peptide_repeat"/>
</dbReference>
<dbReference type="InterPro" id="IPR048984">
    <property type="entry name" value="PipB2_N"/>
</dbReference>
<dbReference type="NCBIfam" id="NF011743">
    <property type="entry name" value="PRK15196.1"/>
    <property type="match status" value="1"/>
</dbReference>
<dbReference type="PANTHER" id="PTHR47485">
    <property type="entry name" value="THYLAKOID LUMENAL 17.4 KDA PROTEIN, CHLOROPLASTIC"/>
    <property type="match status" value="1"/>
</dbReference>
<dbReference type="PANTHER" id="PTHR47485:SF1">
    <property type="entry name" value="THYLAKOID LUMENAL 17.4 KDA PROTEIN, CHLOROPLASTIC"/>
    <property type="match status" value="1"/>
</dbReference>
<dbReference type="Pfam" id="PF00805">
    <property type="entry name" value="Pentapeptide"/>
    <property type="match status" value="3"/>
</dbReference>
<dbReference type="Pfam" id="PF21684">
    <property type="entry name" value="PipB2_N"/>
    <property type="match status" value="1"/>
</dbReference>
<dbReference type="SUPFAM" id="SSF141571">
    <property type="entry name" value="Pentapeptide repeat-like"/>
    <property type="match status" value="1"/>
</dbReference>
<protein>
    <recommendedName>
        <fullName>Secreted effector protein PipB2</fullName>
    </recommendedName>
    <alternativeName>
        <fullName>Type III effector PipB2</fullName>
    </alternativeName>
</protein>
<keyword id="KW-0002">3D-structure</keyword>
<keyword id="KW-1043">Host membrane</keyword>
<keyword id="KW-0472">Membrane</keyword>
<keyword id="KW-1185">Reference proteome</keyword>
<keyword id="KW-0677">Repeat</keyword>
<keyword id="KW-0964">Secreted</keyword>
<keyword id="KW-0843">Virulence</keyword>
<comment type="function">
    <text evidence="1 3 4">Effector proteins function to alter host cell physiology and promote bacterial survival in host tissues. Involved in the reorganization of late endosome/lysosome (LE/Lys) compartments in mammalian cells. Necessary and sufficient to link kinesin-1 onto the Salmonella-containing vacuole (SCV) membrane. Required for centrifugal extension of lysosomal glycoprotein-rich membrane tubules, known as Salmonella-induced filaments (Sifs), away from the SCV and toward the cell periphery. Required for virulence, but not for intracellular survival and replication in phagocytic cells.</text>
</comment>
<comment type="subunit">
    <text evidence="4">Interacts with the host kinesin light chain (KLC), a subunit of the kinesin-1 motor complex.</text>
</comment>
<comment type="interaction">
    <interactant intactId="EBI-15598815">
        <id>Q8ZMM8</id>
    </interactant>
    <interactant intactId="EBI-721019">
        <id>Q07866</id>
        <label>KLC1</label>
    </interactant>
    <organismsDiffer>true</organismsDiffer>
    <experiments>4</experiments>
</comment>
<comment type="subcellular location">
    <subcellularLocation>
        <location>Secreted</location>
    </subcellularLocation>
    <subcellularLocation>
        <location>Host membrane</location>
    </subcellularLocation>
    <text>Secreted via the type III secretion system 2 (SPI-2 T3SS), and delivered into the host cell. In phagocytic cells localizes to the Salmonella-containing vacuole (SCV) and tubular extensions from the SCV, Salmonella-induced filaments (Sifs). In epithelial cells localizes to peripheral vesicles, in addition to SCVs and Sifs. Concentrates in detergent-resistant microdomains (DRMs), present on the intracellular membranes of SCVs and Sifs.</text>
</comment>
<comment type="induction">
    <text evidence="1 2 5">Expression of the gene is regulated by the two-component regulatory system SsrA/SsrB (PubMed:12864852). It is also activated by SlyA and controlled by the two-component regulatory system PhoP/PhoQ (PubMed:15813739). Expressed in host macrophages and when grown in an acidic environment (PubMed:19858298).</text>
</comment>
<comment type="domain">
    <text evidence="1">Contains various tandem pentapeptide repeats in the C-terminal region. The pentapeptide motif is required to efficiently recruit kinesin-1. No position is completely conserved in these repeats, whose consensus sequence is A-[DN]-[FLM]-X-X. The C-terminal 38 amino acid residues, specifically, the C-terminal motif LFNEF, are required for peripheral localization of PipB2 and redistribution of lysosomal-associated membrane protein (LAMP). The N-terminal 225 amino acid residues are sufficient for type III translocation and association with Sifs and SCVs, but not accumulation in peripheral vesicles.</text>
</comment>
<sequence length="350" mass="37274">MERSLDSLAGMAKSAFGAGTSAAMRQATSPKTILEYIINFFTCGGIRRRNETQYQELIETMAETLKSTMPDRGAPLPENIILDDMDGCRVEFNLPGENNEAGQVIVRVSKGDHSETREIPLASFEKICRALLFRCEFSLPQDSVILTAQGGMNLKGAVLTGANLTSENLCDADLSGANLEGAVLFMADCEGANFKGANLSGTSLGDSNFKNACLEDSIMCGATLDHANLTGANLQHASLLGCSMIECNCSGANMDHTNLSGATLIRADMSGATLQGATIMAAIMEGAVLTRANLRKASFISTNLDGADLAEANLNNTCFKDCTLTDLRTEDATMSTSTQTLFNEFYSENI</sequence>